<name>ITM2B_PANTR</name>
<accession>A5A6H8</accession>
<feature type="chain" id="PRO_0000295289" description="Integral membrane protein 2B">
    <location>
        <begin position="1"/>
        <end position="266"/>
    </location>
</feature>
<feature type="chain" id="PRO_0000417475" description="BRI2, membrane form" evidence="1">
    <location>
        <begin position="1"/>
        <end position="243"/>
    </location>
</feature>
<feature type="chain" id="PRO_0000417476" description="BRI2 intracellular domain" evidence="1">
    <location>
        <begin position="1"/>
        <end status="unknown"/>
    </location>
</feature>
<feature type="chain" id="PRO_0000417477" description="BRI2C, soluble form" evidence="1">
    <location>
        <begin status="unknown"/>
        <end position="243"/>
    </location>
</feature>
<feature type="peptide" id="PRO_0000417478" description="Bri23 peptide" evidence="1">
    <location>
        <begin position="244"/>
        <end position="266"/>
    </location>
</feature>
<feature type="topological domain" description="Cytoplasmic" evidence="4">
    <location>
        <begin position="1"/>
        <end position="54"/>
    </location>
</feature>
<feature type="transmembrane region" description="Helical; Signal-anchor for type II membrane protein" evidence="4">
    <location>
        <begin position="55"/>
        <end position="75"/>
    </location>
</feature>
<feature type="topological domain" description="Lumenal" evidence="4">
    <location>
        <begin position="76"/>
        <end position="266"/>
    </location>
</feature>
<feature type="domain" description="BRICHOS" evidence="5">
    <location>
        <begin position="137"/>
        <end position="231"/>
    </location>
</feature>
<feature type="region of interest" description="Necessary for interaction with APP and inhibitor effects on APP processing" evidence="1">
    <location>
        <begin position="102"/>
        <end position="134"/>
    </location>
</feature>
<feature type="site" description="Cleavage; by furin" evidence="1">
    <location>
        <begin position="243"/>
        <end position="244"/>
    </location>
</feature>
<feature type="glycosylation site" description="N-linked (GlcNAc...) asparagine" evidence="4">
    <location>
        <position position="170"/>
    </location>
</feature>
<feature type="disulfide bond" description="Interchain" evidence="1">
    <location>
        <position position="89"/>
    </location>
</feature>
<feature type="disulfide bond" evidence="1">
    <location>
        <begin position="164"/>
        <end position="223"/>
    </location>
</feature>
<feature type="disulfide bond" evidence="1">
    <location>
        <begin position="248"/>
        <end position="265"/>
    </location>
</feature>
<proteinExistence type="evidence at transcript level"/>
<gene>
    <name type="primary">ITM2B</name>
</gene>
<comment type="function">
    <text evidence="1">Plays a regulatory role in the processing of the amyloid-beta A4 precursor protein (APP) and acts as an inhibitor of the amyloid-beta peptide aggregation and fibrils deposition. Plays a role in the induction of neurite outgrowth. Functions as a protease inhibitor by blocking access of secretases to APP cleavage sites (By similarity).</text>
</comment>
<comment type="function">
    <text evidence="1">Mature BRI2 (mBRI2) functions as a modulator of the amyloid-beta A4 precursor protein (APP) processing leading to a strong reduction in the secretion of secretase-processed amyloid-beta protein 40 and amyloid-beta protein 42.</text>
</comment>
<comment type="function">
    <text evidence="1">Bri23 peptide prevents aggregation of APP amyloid-beta protein 42 into toxic oligomers.</text>
</comment>
<comment type="subunit">
    <text evidence="1 2">Homodimer; disulfide-linked. Interacts with SPPL2A and SPPL2B. Interacts with APP. Mature BRI2 (mBRI2) interacts with amyloid-beta A4 protein; the interaction occurs at the cell surface and in the endocytic compartments and enable alpha- and beta-secretase-induced APP cleavage inhibition. Mature BRI2 (mBRI2) interacts with the APP C99; the interaction occurs in the endocytic compartments and enable gamma-secretase-induced C99 cleavage inhibition. May form heterodimers with Bri23 peptide and APP amyloid-beta protein 40 (By similarity). Interacts with ADAM7 in sperm; the interaction increases following capacitation (By similarity).</text>
</comment>
<comment type="subcellular location">
    <molecule>Integral membrane protein 2B</molecule>
    <subcellularLocation>
        <location evidence="3">Golgi apparatus membrane</location>
        <topology evidence="3">Single-pass type II membrane protein</topology>
    </subcellularLocation>
    <text evidence="3">Immature BRI2 (imBRI2) is cleaved by furin in the Golgi into mBRI2 and a Bri23 peptide. mBRI2 is transported to the plasma membrane and Bri23 peptide is secreted.</text>
</comment>
<comment type="subcellular location">
    <molecule>BRI2, membrane form</molecule>
    <subcellularLocation>
        <location evidence="3">Cell membrane</location>
        <topology evidence="3">Single-pass type II membrane protein</topology>
    </subcellularLocation>
    <subcellularLocation>
        <location evidence="3">Endosome membrane</location>
        <topology evidence="3">Single-pass type II membrane protein</topology>
    </subcellularLocation>
    <text evidence="3">Mature BRI2 (mBRI2) needs to be transported from the endoplasmic reticulum compartment to the cell membrane in order to be able to inhibit APP processing.</text>
</comment>
<comment type="subcellular location">
    <molecule>Bri23 peptide</molecule>
    <subcellularLocation>
        <location evidence="3">Secreted</location>
    </subcellularLocation>
    <text evidence="3">Detected in the cerebral spinal fluid (CSF).</text>
</comment>
<comment type="subcellular location">
    <molecule>BRI2C, soluble form</molecule>
    <subcellularLocation>
        <location evidence="3">Secreted</location>
    </subcellularLocation>
</comment>
<comment type="PTM">
    <text evidence="1">The ectodomain C-terminal part of the imBRI2 is processed by furin producing a secreted Bri23 peptide and a mature BRI2, membrane form (mBRI2). The remaining part of the ectodomain of mBRI2 containing the BRICHOS domain is cleaved by ADAM10 and is secreted (BRI2C, soluble form). The membrane-bound N-terminal fragment (BRI2C, membrane form) is further proteolytically processed by SPPL2A and SPPL2B through regulated intramembrane proteolysis producing a secreted C-peptide and a BRI2 intracellular domain (BRI2 ICD) released in the cytosol. Shedding by ADAM10 facilitates intramembrane cleavage but is not absolutely required for BRI2 ICD generation (By similarity).</text>
</comment>
<comment type="PTM">
    <text evidence="1">Glycosylation at Asn-170 is important for cell surface localization, but doesn't affect furin- and ADAM10-induced proteolytic processing.</text>
</comment>
<comment type="similarity">
    <text evidence="6">Belongs to the ITM2 family.</text>
</comment>
<evidence type="ECO:0000250" key="1"/>
<evidence type="ECO:0000250" key="2">
    <source>
        <dbReference type="UniProtKB" id="O89051"/>
    </source>
</evidence>
<evidence type="ECO:0000250" key="3">
    <source>
        <dbReference type="UniProtKB" id="Q9Y287"/>
    </source>
</evidence>
<evidence type="ECO:0000255" key="4"/>
<evidence type="ECO:0000255" key="5">
    <source>
        <dbReference type="PROSITE-ProRule" id="PRU00255"/>
    </source>
</evidence>
<evidence type="ECO:0000305" key="6"/>
<protein>
    <recommendedName>
        <fullName>Integral membrane protein 2B</fullName>
    </recommendedName>
    <alternativeName>
        <fullName>Immature BRI2</fullName>
        <shortName>imBRI2</shortName>
    </alternativeName>
    <alternativeName>
        <fullName>Transmembrane protein BRI</fullName>
        <shortName>Bri</shortName>
    </alternativeName>
    <component>
        <recommendedName>
            <fullName>BRI2, membrane form</fullName>
        </recommendedName>
        <alternativeName>
            <fullName>Mature BRI2</fullName>
            <shortName>mBRI2</shortName>
        </alternativeName>
    </component>
    <component>
        <recommendedName>
            <fullName>BRI2 intracellular domain</fullName>
            <shortName>BRI2 ICD</shortName>
        </recommendedName>
    </component>
    <component>
        <recommendedName>
            <fullName>BRI2C, soluble form</fullName>
        </recommendedName>
    </component>
    <component>
        <recommendedName>
            <fullName>Bri23 peptide</fullName>
            <shortName>Bri2-23</shortName>
        </recommendedName>
        <alternativeName>
            <fullName>ABri23</fullName>
        </alternativeName>
        <alternativeName>
            <fullName>C-terminal peptide</fullName>
        </alternativeName>
        <alternativeName>
            <fullName>P23 peptide</fullName>
        </alternativeName>
    </component>
</protein>
<reference key="1">
    <citation type="journal article" date="2007" name="Gene">
        <title>Mapping of chimpanzee full-length cDNAs onto the human genome unveils large potential divergence of the transcriptome.</title>
        <authorList>
            <person name="Sakate R."/>
            <person name="Suto Y."/>
            <person name="Imanishi T."/>
            <person name="Tanoue T."/>
            <person name="Hida M."/>
            <person name="Hayasaka I."/>
            <person name="Kusuda J."/>
            <person name="Gojobori T."/>
            <person name="Hashimoto K."/>
            <person name="Hirai M."/>
        </authorList>
    </citation>
    <scope>NUCLEOTIDE SEQUENCE [MRNA]</scope>
    <source>
        <tissue>Cerebellum</tissue>
    </source>
</reference>
<dbReference type="EMBL" id="AB222106">
    <property type="protein sequence ID" value="BAF62351.1"/>
    <property type="molecule type" value="mRNA"/>
</dbReference>
<dbReference type="RefSeq" id="NP_001092017.1">
    <property type="nucleotide sequence ID" value="NM_001098547.1"/>
</dbReference>
<dbReference type="SMR" id="A5A6H8"/>
<dbReference type="FunCoup" id="A5A6H8">
    <property type="interactions" value="1312"/>
</dbReference>
<dbReference type="STRING" id="9598.ENSPTRP00000009973"/>
<dbReference type="GlyCosmos" id="A5A6H8">
    <property type="glycosylation" value="1 site, No reported glycans"/>
</dbReference>
<dbReference type="PaxDb" id="9598-ENSPTRP00000009973"/>
<dbReference type="Ensembl" id="ENSPTRT00000010775.4">
    <property type="protein sequence ID" value="ENSPTRP00000009973.3"/>
    <property type="gene ID" value="ENSPTRG00000005863.6"/>
</dbReference>
<dbReference type="GeneID" id="452714"/>
<dbReference type="KEGG" id="ptr:452714"/>
<dbReference type="CTD" id="9445"/>
<dbReference type="VGNC" id="VGNC:5071">
    <property type="gene designation" value="ITM2B"/>
</dbReference>
<dbReference type="eggNOG" id="KOG4681">
    <property type="taxonomic scope" value="Eukaryota"/>
</dbReference>
<dbReference type="GeneTree" id="ENSGT00950000183115"/>
<dbReference type="HOGENOM" id="CLU_074596_0_0_1"/>
<dbReference type="InParanoid" id="A5A6H8"/>
<dbReference type="OMA" id="YFAFQQD"/>
<dbReference type="OrthoDB" id="11349at9604"/>
<dbReference type="TreeFam" id="TF317770"/>
<dbReference type="Proteomes" id="UP000002277">
    <property type="component" value="Chromosome 13"/>
</dbReference>
<dbReference type="Bgee" id="ENSPTRG00000005863">
    <property type="expression patterns" value="Expressed in cortex of kidney and 21 other cell types or tissues"/>
</dbReference>
<dbReference type="GO" id="GO:0010008">
    <property type="term" value="C:endosome membrane"/>
    <property type="evidence" value="ECO:0007669"/>
    <property type="project" value="UniProtKB-SubCell"/>
</dbReference>
<dbReference type="GO" id="GO:0005615">
    <property type="term" value="C:extracellular space"/>
    <property type="evidence" value="ECO:0000250"/>
    <property type="project" value="UniProtKB"/>
</dbReference>
<dbReference type="GO" id="GO:0005794">
    <property type="term" value="C:Golgi apparatus"/>
    <property type="evidence" value="ECO:0000318"/>
    <property type="project" value="GO_Central"/>
</dbReference>
<dbReference type="GO" id="GO:0000139">
    <property type="term" value="C:Golgi membrane"/>
    <property type="evidence" value="ECO:0007669"/>
    <property type="project" value="UniProtKB-SubCell"/>
</dbReference>
<dbReference type="GO" id="GO:0030660">
    <property type="term" value="C:Golgi-associated vesicle membrane"/>
    <property type="evidence" value="ECO:0000250"/>
    <property type="project" value="UniProtKB"/>
</dbReference>
<dbReference type="GO" id="GO:0031090">
    <property type="term" value="C:organelle membrane"/>
    <property type="evidence" value="ECO:0000250"/>
    <property type="project" value="UniProtKB"/>
</dbReference>
<dbReference type="GO" id="GO:0005886">
    <property type="term" value="C:plasma membrane"/>
    <property type="evidence" value="ECO:0000250"/>
    <property type="project" value="UniProtKB"/>
</dbReference>
<dbReference type="GO" id="GO:0001540">
    <property type="term" value="F:amyloid-beta binding"/>
    <property type="evidence" value="ECO:0000318"/>
    <property type="project" value="GO_Central"/>
</dbReference>
<dbReference type="GO" id="GO:0005524">
    <property type="term" value="F:ATP binding"/>
    <property type="evidence" value="ECO:0007669"/>
    <property type="project" value="Ensembl"/>
</dbReference>
<dbReference type="GO" id="GO:0042985">
    <property type="term" value="P:negative regulation of amyloid precursor protein biosynthetic process"/>
    <property type="evidence" value="ECO:0000250"/>
    <property type="project" value="UniProtKB"/>
</dbReference>
<dbReference type="InterPro" id="IPR007084">
    <property type="entry name" value="BRICHOS_dom"/>
</dbReference>
<dbReference type="InterPro" id="IPR040145">
    <property type="entry name" value="ITM2"/>
</dbReference>
<dbReference type="PANTHER" id="PTHR10962:SF4">
    <property type="entry name" value="INTEGRAL MEMBRANE PROTEIN 2B"/>
    <property type="match status" value="1"/>
</dbReference>
<dbReference type="PANTHER" id="PTHR10962">
    <property type="entry name" value="INTEGRAL TRANSMEMBRANE PROTEIN 2"/>
    <property type="match status" value="1"/>
</dbReference>
<dbReference type="Pfam" id="PF04089">
    <property type="entry name" value="BRICHOS"/>
    <property type="match status" value="1"/>
</dbReference>
<dbReference type="SMART" id="SM01039">
    <property type="entry name" value="BRICHOS"/>
    <property type="match status" value="1"/>
</dbReference>
<dbReference type="PROSITE" id="PS50869">
    <property type="entry name" value="BRICHOS"/>
    <property type="match status" value="1"/>
</dbReference>
<sequence>MVKVTFNSALAQKEAKKDEPKSGEEALIIPPDAVAVDCKDPDDVVPVGQRRAWCWCMCFGLAFMLAGVILGGAYLYKYFALQPDDVYYCGIKYIKDDVILNEPSADAPAALYQTIEENIKIFEEEEVEFISVPVPEFADSDPANIVHDFNKKLTAYLDLNLDKCYVIPLNTSIVMPPRNLLELLINIKAGTYLPQSYLIHEHMVITDRIENIDHLGFFIYRLCHDKETYKLQRRETIKGIQKREASNCFAIRHFENKFAVETLICS</sequence>
<keyword id="KW-1003">Cell membrane</keyword>
<keyword id="KW-1015">Disulfide bond</keyword>
<keyword id="KW-0967">Endosome</keyword>
<keyword id="KW-0325">Glycoprotein</keyword>
<keyword id="KW-0333">Golgi apparatus</keyword>
<keyword id="KW-0472">Membrane</keyword>
<keyword id="KW-1185">Reference proteome</keyword>
<keyword id="KW-0964">Secreted</keyword>
<keyword id="KW-0735">Signal-anchor</keyword>
<keyword id="KW-0812">Transmembrane</keyword>
<keyword id="KW-1133">Transmembrane helix</keyword>
<organism>
    <name type="scientific">Pan troglodytes</name>
    <name type="common">Chimpanzee</name>
    <dbReference type="NCBI Taxonomy" id="9598"/>
    <lineage>
        <taxon>Eukaryota</taxon>
        <taxon>Metazoa</taxon>
        <taxon>Chordata</taxon>
        <taxon>Craniata</taxon>
        <taxon>Vertebrata</taxon>
        <taxon>Euteleostomi</taxon>
        <taxon>Mammalia</taxon>
        <taxon>Eutheria</taxon>
        <taxon>Euarchontoglires</taxon>
        <taxon>Primates</taxon>
        <taxon>Haplorrhini</taxon>
        <taxon>Catarrhini</taxon>
        <taxon>Hominidae</taxon>
        <taxon>Pan</taxon>
    </lineage>
</organism>